<comment type="function">
    <text evidence="1">Catalyzes the condensation of pantoate with beta-alanine in an ATP-dependent reaction via a pantoyl-adenylate intermediate.</text>
</comment>
<comment type="catalytic activity">
    <reaction evidence="1">
        <text>(R)-pantoate + beta-alanine + ATP = (R)-pantothenate + AMP + diphosphate + H(+)</text>
        <dbReference type="Rhea" id="RHEA:10912"/>
        <dbReference type="ChEBI" id="CHEBI:15378"/>
        <dbReference type="ChEBI" id="CHEBI:15980"/>
        <dbReference type="ChEBI" id="CHEBI:29032"/>
        <dbReference type="ChEBI" id="CHEBI:30616"/>
        <dbReference type="ChEBI" id="CHEBI:33019"/>
        <dbReference type="ChEBI" id="CHEBI:57966"/>
        <dbReference type="ChEBI" id="CHEBI:456215"/>
        <dbReference type="EC" id="6.3.2.1"/>
    </reaction>
</comment>
<comment type="pathway">
    <text evidence="1">Cofactor biosynthesis; (R)-pantothenate biosynthesis; (R)-pantothenate from (R)-pantoate and beta-alanine: step 1/1.</text>
</comment>
<comment type="subunit">
    <text evidence="1">Homodimer.</text>
</comment>
<comment type="subcellular location">
    <subcellularLocation>
        <location evidence="1">Cytoplasm</location>
    </subcellularLocation>
</comment>
<comment type="miscellaneous">
    <text evidence="1">The reaction proceeds by a bi uni uni bi ping pong mechanism.</text>
</comment>
<comment type="similarity">
    <text evidence="1">Belongs to the pantothenate synthetase family.</text>
</comment>
<name>PANC_ACIBS</name>
<organism>
    <name type="scientific">Acinetobacter baumannii (strain SDF)</name>
    <dbReference type="NCBI Taxonomy" id="509170"/>
    <lineage>
        <taxon>Bacteria</taxon>
        <taxon>Pseudomonadati</taxon>
        <taxon>Pseudomonadota</taxon>
        <taxon>Gammaproteobacteria</taxon>
        <taxon>Moraxellales</taxon>
        <taxon>Moraxellaceae</taxon>
        <taxon>Acinetobacter</taxon>
        <taxon>Acinetobacter calcoaceticus/baumannii complex</taxon>
    </lineage>
</organism>
<reference key="1">
    <citation type="journal article" date="2008" name="PLoS ONE">
        <title>Comparative analysis of Acinetobacters: three genomes for three lifestyles.</title>
        <authorList>
            <person name="Vallenet D."/>
            <person name="Nordmann P."/>
            <person name="Barbe V."/>
            <person name="Poirel L."/>
            <person name="Mangenot S."/>
            <person name="Bataille E."/>
            <person name="Dossat C."/>
            <person name="Gas S."/>
            <person name="Kreimeyer A."/>
            <person name="Lenoble P."/>
            <person name="Oztas S."/>
            <person name="Poulain J."/>
            <person name="Segurens B."/>
            <person name="Robert C."/>
            <person name="Abergel C."/>
            <person name="Claverie J.-M."/>
            <person name="Raoult D."/>
            <person name="Medigue C."/>
            <person name="Weissenbach J."/>
            <person name="Cruveiller S."/>
        </authorList>
    </citation>
    <scope>NUCLEOTIDE SEQUENCE [LARGE SCALE GENOMIC DNA]</scope>
    <source>
        <strain>SDF</strain>
    </source>
</reference>
<protein>
    <recommendedName>
        <fullName evidence="1">Pantothenate synthetase</fullName>
        <shortName evidence="1">PS</shortName>
        <ecNumber evidence="1">6.3.2.1</ecNumber>
    </recommendedName>
    <alternativeName>
        <fullName evidence="1">Pantoate--beta-alanine ligase</fullName>
    </alternativeName>
    <alternativeName>
        <fullName evidence="1">Pantoate-activating enzyme</fullName>
    </alternativeName>
</protein>
<dbReference type="EC" id="6.3.2.1" evidence="1"/>
<dbReference type="EMBL" id="CU468230">
    <property type="protein sequence ID" value="CAP02222.1"/>
    <property type="molecule type" value="Genomic_DNA"/>
</dbReference>
<dbReference type="SMR" id="B0VKK3"/>
<dbReference type="KEGG" id="abm:ABSDF2932"/>
<dbReference type="HOGENOM" id="CLU_047148_0_0_6"/>
<dbReference type="UniPathway" id="UPA00028">
    <property type="reaction ID" value="UER00005"/>
</dbReference>
<dbReference type="Proteomes" id="UP000001741">
    <property type="component" value="Chromosome"/>
</dbReference>
<dbReference type="GO" id="GO:0005829">
    <property type="term" value="C:cytosol"/>
    <property type="evidence" value="ECO:0007669"/>
    <property type="project" value="TreeGrafter"/>
</dbReference>
<dbReference type="GO" id="GO:0005524">
    <property type="term" value="F:ATP binding"/>
    <property type="evidence" value="ECO:0007669"/>
    <property type="project" value="UniProtKB-KW"/>
</dbReference>
<dbReference type="GO" id="GO:0004592">
    <property type="term" value="F:pantoate-beta-alanine ligase activity"/>
    <property type="evidence" value="ECO:0007669"/>
    <property type="project" value="UniProtKB-UniRule"/>
</dbReference>
<dbReference type="GO" id="GO:0015940">
    <property type="term" value="P:pantothenate biosynthetic process"/>
    <property type="evidence" value="ECO:0007669"/>
    <property type="project" value="UniProtKB-UniRule"/>
</dbReference>
<dbReference type="CDD" id="cd00560">
    <property type="entry name" value="PanC"/>
    <property type="match status" value="1"/>
</dbReference>
<dbReference type="FunFam" id="3.40.50.620:FF:000013">
    <property type="entry name" value="Pantothenate synthetase"/>
    <property type="match status" value="1"/>
</dbReference>
<dbReference type="Gene3D" id="3.40.50.620">
    <property type="entry name" value="HUPs"/>
    <property type="match status" value="1"/>
</dbReference>
<dbReference type="Gene3D" id="3.30.1300.10">
    <property type="entry name" value="Pantoate-beta-alanine ligase, C-terminal domain"/>
    <property type="match status" value="1"/>
</dbReference>
<dbReference type="HAMAP" id="MF_00158">
    <property type="entry name" value="PanC"/>
    <property type="match status" value="1"/>
</dbReference>
<dbReference type="InterPro" id="IPR004821">
    <property type="entry name" value="Cyt_trans-like"/>
</dbReference>
<dbReference type="InterPro" id="IPR003721">
    <property type="entry name" value="Pantoate_ligase"/>
</dbReference>
<dbReference type="InterPro" id="IPR042176">
    <property type="entry name" value="Pantoate_ligase_C"/>
</dbReference>
<dbReference type="InterPro" id="IPR014729">
    <property type="entry name" value="Rossmann-like_a/b/a_fold"/>
</dbReference>
<dbReference type="NCBIfam" id="TIGR00125">
    <property type="entry name" value="cyt_tran_rel"/>
    <property type="match status" value="1"/>
</dbReference>
<dbReference type="NCBIfam" id="TIGR00018">
    <property type="entry name" value="panC"/>
    <property type="match status" value="1"/>
</dbReference>
<dbReference type="PANTHER" id="PTHR21299">
    <property type="entry name" value="CYTIDYLATE KINASE/PANTOATE-BETA-ALANINE LIGASE"/>
    <property type="match status" value="1"/>
</dbReference>
<dbReference type="PANTHER" id="PTHR21299:SF1">
    <property type="entry name" value="PANTOATE--BETA-ALANINE LIGASE"/>
    <property type="match status" value="1"/>
</dbReference>
<dbReference type="Pfam" id="PF02569">
    <property type="entry name" value="Pantoate_ligase"/>
    <property type="match status" value="1"/>
</dbReference>
<dbReference type="SUPFAM" id="SSF52374">
    <property type="entry name" value="Nucleotidylyl transferase"/>
    <property type="match status" value="1"/>
</dbReference>
<gene>
    <name evidence="1" type="primary">panC</name>
    <name type="ordered locus">ABSDF2932</name>
</gene>
<feature type="chain" id="PRO_1000118135" description="Pantothenate synthetase">
    <location>
        <begin position="1"/>
        <end position="282"/>
    </location>
</feature>
<feature type="active site" description="Proton donor" evidence="1">
    <location>
        <position position="37"/>
    </location>
</feature>
<feature type="binding site" evidence="1">
    <location>
        <begin position="30"/>
        <end position="37"/>
    </location>
    <ligand>
        <name>ATP</name>
        <dbReference type="ChEBI" id="CHEBI:30616"/>
    </ligand>
</feature>
<feature type="binding site" evidence="1">
    <location>
        <position position="61"/>
    </location>
    <ligand>
        <name>(R)-pantoate</name>
        <dbReference type="ChEBI" id="CHEBI:15980"/>
    </ligand>
</feature>
<feature type="binding site" evidence="1">
    <location>
        <position position="61"/>
    </location>
    <ligand>
        <name>beta-alanine</name>
        <dbReference type="ChEBI" id="CHEBI:57966"/>
    </ligand>
</feature>
<feature type="binding site" evidence="1">
    <location>
        <begin position="148"/>
        <end position="151"/>
    </location>
    <ligand>
        <name>ATP</name>
        <dbReference type="ChEBI" id="CHEBI:30616"/>
    </ligand>
</feature>
<feature type="binding site" evidence="1">
    <location>
        <position position="154"/>
    </location>
    <ligand>
        <name>(R)-pantoate</name>
        <dbReference type="ChEBI" id="CHEBI:15980"/>
    </ligand>
</feature>
<feature type="binding site" evidence="1">
    <location>
        <position position="177"/>
    </location>
    <ligand>
        <name>ATP</name>
        <dbReference type="ChEBI" id="CHEBI:30616"/>
    </ligand>
</feature>
<feature type="binding site" evidence="1">
    <location>
        <begin position="185"/>
        <end position="188"/>
    </location>
    <ligand>
        <name>ATP</name>
        <dbReference type="ChEBI" id="CHEBI:30616"/>
    </ligand>
</feature>
<accession>B0VKK3</accession>
<keyword id="KW-0067">ATP-binding</keyword>
<keyword id="KW-0963">Cytoplasm</keyword>
<keyword id="KW-0436">Ligase</keyword>
<keyword id="KW-0547">Nucleotide-binding</keyword>
<keyword id="KW-0566">Pantothenate biosynthesis</keyword>
<evidence type="ECO:0000255" key="1">
    <source>
        <dbReference type="HAMAP-Rule" id="MF_00158"/>
    </source>
</evidence>
<proteinExistence type="inferred from homology"/>
<sequence length="282" mass="31066">MKTETTIQGLAASLNPARAARKIIGFVPTMGNLHEGHLTLVREAKKLCDVVVVSIFVNPTQFGPGEDFDNYPRTLEQDSRLLADVGCDIIFAPSVEQMYGTQPRLTNISVSQITDDLCGSSRPGHFDGVALVVTKLFNIVQPNYAFFGQKDYQQLAVIRQFVQDLNIPLEVIGVPIVRAEDGLALSSRNGYLTPEQRQVAPVIYQGLKQAEEQLHQGKDLQQVLADLKTLLTDNGFVVDYVEARQPNLLAASQFDRDIVLFVAAKLGGTRLIDNLQVAFTPQ</sequence>